<organism>
    <name type="scientific">Lymnaea stagnalis</name>
    <name type="common">Great pond snail</name>
    <name type="synonym">Helix stagnalis</name>
    <dbReference type="NCBI Taxonomy" id="6523"/>
    <lineage>
        <taxon>Eukaryota</taxon>
        <taxon>Metazoa</taxon>
        <taxon>Spiralia</taxon>
        <taxon>Lophotrochozoa</taxon>
        <taxon>Mollusca</taxon>
        <taxon>Gastropoda</taxon>
        <taxon>Heterobranchia</taxon>
        <taxon>Euthyneura</taxon>
        <taxon>Panpulmonata</taxon>
        <taxon>Hygrophila</taxon>
        <taxon>Lymnaeoidea</taxon>
        <taxon>Lymnaeidae</taxon>
        <taxon>Lymnaea</taxon>
    </lineage>
</organism>
<keyword id="KW-1003">Cell membrane</keyword>
<keyword id="KW-0325">Glycoprotein</keyword>
<keyword id="KW-0407">Ion channel</keyword>
<keyword id="KW-0406">Ion transport</keyword>
<keyword id="KW-1071">Ligand-gated ion channel</keyword>
<keyword id="KW-0472">Membrane</keyword>
<keyword id="KW-0628">Postsynaptic cell membrane</keyword>
<keyword id="KW-0675">Receptor</keyword>
<keyword id="KW-0732">Signal</keyword>
<keyword id="KW-0770">Synapse</keyword>
<keyword id="KW-0812">Transmembrane</keyword>
<keyword id="KW-1133">Transmembrane helix</keyword>
<keyword id="KW-0813">Transport</keyword>
<accession>P26591</accession>
<reference key="1">
    <citation type="journal article" date="1991" name="FEBS Lett.">
        <title>Cloning of a cDNA that encodes an invertebrate glutamate receptor subunit.</title>
        <authorList>
            <person name="Hutton M.L."/>
            <person name="Harvey R.J."/>
            <person name="Barnard E.A."/>
            <person name="Darlison M.G."/>
        </authorList>
    </citation>
    <scope>NUCLEOTIDE SEQUENCE [MRNA]</scope>
</reference>
<name>GLRK_LYMST</name>
<comment type="function">
    <text>Receptor for glutamate. L-glutamate acts as an excitatory neurotransmitter at many synapses in the central nervous system. The postsynaptic actions of Glu are mediated by a variety of receptors.</text>
</comment>
<comment type="subcellular location">
    <subcellularLocation>
        <location>Cell membrane</location>
        <topology>Multi-pass membrane protein</topology>
    </subcellularLocation>
    <subcellularLocation>
        <location>Postsynaptic cell membrane</location>
        <topology>Multi-pass membrane protein</topology>
    </subcellularLocation>
</comment>
<comment type="similarity">
    <text evidence="3">Belongs to the glutamate-gated ion channel (TC 1.A.10.1) family.</text>
</comment>
<protein>
    <recommendedName>
        <fullName>Glutamate receptor</fullName>
    </recommendedName>
</protein>
<sequence length="917" mass="103139">MDTCVFPLVVLWISMRITSTLDEVPIGGIFDSRSVQALTAFRHEIHMFNRAYSHVYRYKLKNDTTILDVTDSFAVSNALCHHLSRGDLAIFGVSNASSLATIQSYTDTFNVPFVTISMAQNNSHNGSYQIYMRPMYINALVDVIVHYRWEKVAFYYDSDEGLVRLQQLFQATNKYDKMIISIDTKRITSVENGYHMLKELHLMDPEMEHRVLLDVRTDKAEQIILKVMNDSKINNAKFHFLLGDLGMLEINTTHFKIGGVNITGFQLVDPFNSTSELFISTWSSLDPVYWPGAGTNHVNYEAALAADSVRLFKSAFGSILQKDPNFLRRSRSGTAGKSMKCTDDSEIKTGHGQMILEEMKKVKFEGVTGHVAFNEQGHRKDFTLGVYNVAMTRGTAKIGYWNEREGKLHAHNPRLFQNNSSDMNRTRIVTTIIKEPYVMVNNVIRDGKPLVGNEPVEGFCIDLTKAVAEKVGFDFVIQFVKDGSYGSVLSNGTWDGIVGELIRHEADMAIAPFTITADRSRVIDFTKPFMSLGISIMIKRPQPAGKHFFSFMEPLSSEIWMCIVFAYIGVSVVLFLVSRFSPNEWHLSEAHHSYIANDFSISNSLWFSLGAFMQQGCDISPRSMSGRIVGSVWWFFTLIIISSYTANLAAFLTVERMLTPIDSAEDLARQTEIQYGTIMSGSTKAFFKNSQFQTYQRMWAYMTSAQPSVFVKTHEEGIQRVRQSNGKYAYLTESSTIDYVSNRKPCDTLKVGSNLNSDGFGIGTPVGSDLRDKLNFSVLELRENGDLAKWEKIWFDRGECPQHSSNKEGAQSALTLANVAGIFYILIGGLVVAVLSAAFEFLYKSRMDSRKSRMSFGSALRTKARLSFKGHIDSEQKTTGNGTRRRSHNSVTYTYTGPTNVMGGSHAFEDSNTHTEV</sequence>
<dbReference type="EMBL" id="X60086">
    <property type="protein sequence ID" value="CAA42683.1"/>
    <property type="molecule type" value="mRNA"/>
</dbReference>
<dbReference type="PIR" id="S18443">
    <property type="entry name" value="ACGAE"/>
</dbReference>
<dbReference type="SMR" id="P26591"/>
<dbReference type="GO" id="GO:0045211">
    <property type="term" value="C:postsynaptic membrane"/>
    <property type="evidence" value="ECO:0007669"/>
    <property type="project" value="UniProtKB-SubCell"/>
</dbReference>
<dbReference type="GO" id="GO:0015276">
    <property type="term" value="F:ligand-gated monoatomic ion channel activity"/>
    <property type="evidence" value="ECO:0007669"/>
    <property type="project" value="InterPro"/>
</dbReference>
<dbReference type="GO" id="GO:0038023">
    <property type="term" value="F:signaling receptor activity"/>
    <property type="evidence" value="ECO:0007669"/>
    <property type="project" value="InterPro"/>
</dbReference>
<dbReference type="CDD" id="cd06380">
    <property type="entry name" value="PBP1_iGluR_AMPA"/>
    <property type="match status" value="1"/>
</dbReference>
<dbReference type="CDD" id="cd13715">
    <property type="entry name" value="PBP2_iGluR_AMPA"/>
    <property type="match status" value="1"/>
</dbReference>
<dbReference type="FunFam" id="1.10.287.70:FF:000067">
    <property type="entry name" value="glutamate receptor 2 isoform X1"/>
    <property type="match status" value="1"/>
</dbReference>
<dbReference type="FunFam" id="3.40.190.10:FF:000060">
    <property type="entry name" value="Glutamate receptor ionotropic, kainate 1"/>
    <property type="match status" value="1"/>
</dbReference>
<dbReference type="FunFam" id="3.40.190.10:FF:000001">
    <property type="entry name" value="Glutamate receptor ionotropic, kainate 2"/>
    <property type="match status" value="1"/>
</dbReference>
<dbReference type="Gene3D" id="1.10.287.70">
    <property type="match status" value="1"/>
</dbReference>
<dbReference type="Gene3D" id="3.40.50.2300">
    <property type="match status" value="2"/>
</dbReference>
<dbReference type="Gene3D" id="3.40.190.10">
    <property type="entry name" value="Periplasmic binding protein-like II"/>
    <property type="match status" value="1"/>
</dbReference>
<dbReference type="InterPro" id="IPR001828">
    <property type="entry name" value="ANF_lig-bd_rcpt"/>
</dbReference>
<dbReference type="InterPro" id="IPR019594">
    <property type="entry name" value="Glu/Gly-bd"/>
</dbReference>
<dbReference type="InterPro" id="IPR001508">
    <property type="entry name" value="Iono_Glu_rcpt_met"/>
</dbReference>
<dbReference type="InterPro" id="IPR015683">
    <property type="entry name" value="Ionotropic_Glu_rcpt"/>
</dbReference>
<dbReference type="InterPro" id="IPR001320">
    <property type="entry name" value="Iontro_rcpt_C"/>
</dbReference>
<dbReference type="InterPro" id="IPR028082">
    <property type="entry name" value="Peripla_BP_I"/>
</dbReference>
<dbReference type="PANTHER" id="PTHR18966">
    <property type="entry name" value="IONOTROPIC GLUTAMATE RECEPTOR"/>
    <property type="match status" value="1"/>
</dbReference>
<dbReference type="Pfam" id="PF01094">
    <property type="entry name" value="ANF_receptor"/>
    <property type="match status" value="1"/>
</dbReference>
<dbReference type="Pfam" id="PF00060">
    <property type="entry name" value="Lig_chan"/>
    <property type="match status" value="1"/>
</dbReference>
<dbReference type="Pfam" id="PF10613">
    <property type="entry name" value="Lig_chan-Glu_bd"/>
    <property type="match status" value="1"/>
</dbReference>
<dbReference type="PRINTS" id="PR00177">
    <property type="entry name" value="NMDARECEPTOR"/>
</dbReference>
<dbReference type="SMART" id="SM00918">
    <property type="entry name" value="Lig_chan-Glu_bd"/>
    <property type="match status" value="1"/>
</dbReference>
<dbReference type="SMART" id="SM00079">
    <property type="entry name" value="PBPe"/>
    <property type="match status" value="1"/>
</dbReference>
<dbReference type="SUPFAM" id="SSF53822">
    <property type="entry name" value="Periplasmic binding protein-like I"/>
    <property type="match status" value="1"/>
</dbReference>
<dbReference type="SUPFAM" id="SSF53850">
    <property type="entry name" value="Periplasmic binding protein-like II"/>
    <property type="match status" value="1"/>
</dbReference>
<dbReference type="SUPFAM" id="SSF81324">
    <property type="entry name" value="Voltage-gated potassium channels"/>
    <property type="match status" value="1"/>
</dbReference>
<evidence type="ECO:0000255" key="1"/>
<evidence type="ECO:0000256" key="2">
    <source>
        <dbReference type="SAM" id="MobiDB-lite"/>
    </source>
</evidence>
<evidence type="ECO:0000305" key="3"/>
<feature type="signal peptide" evidence="1">
    <location>
        <begin position="1"/>
        <end position="19"/>
    </location>
</feature>
<feature type="chain" id="PRO_0000011560" description="Glutamate receptor">
    <location>
        <begin position="20"/>
        <end position="917"/>
    </location>
</feature>
<feature type="topological domain" description="Extracellular" evidence="1">
    <location>
        <begin position="20"/>
        <end position="556"/>
    </location>
</feature>
<feature type="transmembrane region" description="Helical" evidence="1">
    <location>
        <begin position="557"/>
        <end position="577"/>
    </location>
</feature>
<feature type="topological domain" description="Cytoplasmic" evidence="1">
    <location>
        <begin position="578"/>
        <end position="631"/>
    </location>
</feature>
<feature type="transmembrane region" description="Helical" evidence="1">
    <location>
        <begin position="632"/>
        <end position="652"/>
    </location>
</feature>
<feature type="topological domain" description="Extracellular" evidence="1">
    <location>
        <begin position="653"/>
        <end position="818"/>
    </location>
</feature>
<feature type="transmembrane region" description="Helical" evidence="1">
    <location>
        <begin position="819"/>
        <end position="839"/>
    </location>
</feature>
<feature type="topological domain" description="Cytoplasmic" evidence="1">
    <location>
        <begin position="840"/>
        <end position="917"/>
    </location>
</feature>
<feature type="region of interest" description="Disordered" evidence="2">
    <location>
        <begin position="871"/>
        <end position="896"/>
    </location>
</feature>
<feature type="glycosylation site" description="N-linked (GlcNAc...) asparagine" evidence="1">
    <location>
        <position position="62"/>
    </location>
</feature>
<feature type="glycosylation site" description="N-linked (GlcNAc...) asparagine" evidence="1">
    <location>
        <position position="95"/>
    </location>
</feature>
<feature type="glycosylation site" description="N-linked (GlcNAc...) asparagine" evidence="1">
    <location>
        <position position="121"/>
    </location>
</feature>
<feature type="glycosylation site" description="N-linked (GlcNAc...) asparagine" evidence="1">
    <location>
        <position position="125"/>
    </location>
</feature>
<feature type="glycosylation site" description="N-linked (GlcNAc...) asparagine" evidence="1">
    <location>
        <position position="229"/>
    </location>
</feature>
<feature type="glycosylation site" description="N-linked (GlcNAc...) asparagine" evidence="1">
    <location>
        <position position="251"/>
    </location>
</feature>
<feature type="glycosylation site" description="N-linked (GlcNAc...) asparagine" evidence="1">
    <location>
        <position position="261"/>
    </location>
</feature>
<feature type="glycosylation site" description="N-linked (GlcNAc...) asparagine" evidence="1">
    <location>
        <position position="272"/>
    </location>
</feature>
<feature type="glycosylation site" description="N-linked (GlcNAc...) asparagine" evidence="1">
    <location>
        <position position="418"/>
    </location>
</feature>
<feature type="glycosylation site" description="N-linked (GlcNAc...) asparagine" evidence="1">
    <location>
        <position position="419"/>
    </location>
</feature>
<feature type="glycosylation site" description="N-linked (GlcNAc...) asparagine" evidence="1">
    <location>
        <position position="424"/>
    </location>
</feature>
<feature type="glycosylation site" description="N-linked (GlcNAc...) asparagine" evidence="1">
    <location>
        <position position="491"/>
    </location>
</feature>
<feature type="glycosylation site" description="N-linked (GlcNAc...) asparagine" evidence="1">
    <location>
        <position position="775"/>
    </location>
</feature>
<proteinExistence type="evidence at transcript level"/>